<name>ERG15_ARATH</name>
<organism>
    <name type="scientific">Arabidopsis thaliana</name>
    <name type="common">Mouse-ear cress</name>
    <dbReference type="NCBI Taxonomy" id="3702"/>
    <lineage>
        <taxon>Eukaryota</taxon>
        <taxon>Viridiplantae</taxon>
        <taxon>Streptophyta</taxon>
        <taxon>Embryophyta</taxon>
        <taxon>Tracheophyta</taxon>
        <taxon>Spermatophyta</taxon>
        <taxon>Magnoliopsida</taxon>
        <taxon>eudicotyledons</taxon>
        <taxon>Gunneridae</taxon>
        <taxon>Pentapetalae</taxon>
        <taxon>rosids</taxon>
        <taxon>malvids</taxon>
        <taxon>Brassicales</taxon>
        <taxon>Brassicaceae</taxon>
        <taxon>Camelineae</taxon>
        <taxon>Arabidopsis</taxon>
    </lineage>
</organism>
<sequence>MKPFVIRNLPRFQSTLRSSLLYTNHRPSSRFSLSTRRFTTGATYIRRWKATAAQTLKLSAVNSTVMMKPAKIALDQFIASLFTFLLLYILRRSSNKNKKNRGLVVSQNDTVSKNLETEVDSGTDVIIVGAGVAGSALAHTLGKEGRRVHVIERDFSEQDRIVGELLQPGGYLKLIELGLEDCVKKIDAQRVLGYVLFKDGKHTKLAYPLETFDSDVAGRSFHNGRFVQRMREKALTLSNVRLEQGTVTSLLEEHGTIKGVRYRTKEGNEFRSFAPLTIVCDGCFSNLRRSLCKPKVDVPSTFVGLVLENCELPFANHGHVVLGDPSPILMYPISSSEVRCLVDVPGQKLPPIANGEMAKYLKTRVAPQVPTKVREAFITAVEKGNIRTMPNRSMPADPIPTPGALLLGDAFNMRHPLTGGGMTVALADIVVLRDLLRPIRNLNDKEALSKYIESFYTLRKPVASTINTLADALYKVFLASSDEARTEMREACFDYLSLGGVFSSGPVALLSGLNPRPLSLVLHFFAVAIYAVCRLMLPFPSIESFWLGARIISSASSIIFPIIKAEGVRQMFFPRTIPAIYRAPP</sequence>
<evidence type="ECO:0000250" key="1">
    <source>
        <dbReference type="UniProtKB" id="Q14534"/>
    </source>
</evidence>
<evidence type="ECO:0000255" key="2"/>
<evidence type="ECO:0000269" key="3">
    <source>
    </source>
</evidence>
<evidence type="ECO:0000305" key="4"/>
<dbReference type="EC" id="1.14.14.17" evidence="3"/>
<dbReference type="EMBL" id="AC004786">
    <property type="protein sequence ID" value="AAC32430.1"/>
    <property type="molecule type" value="Genomic_DNA"/>
</dbReference>
<dbReference type="EMBL" id="CP002685">
    <property type="protein sequence ID" value="AEC07362.1"/>
    <property type="molecule type" value="Genomic_DNA"/>
</dbReference>
<dbReference type="PIR" id="D84617">
    <property type="entry name" value="D84617"/>
</dbReference>
<dbReference type="RefSeq" id="NP_179868.1">
    <property type="nucleotide sequence ID" value="NM_127848.4"/>
</dbReference>
<dbReference type="SMR" id="O81000"/>
<dbReference type="FunCoup" id="O81000">
    <property type="interactions" value="599"/>
</dbReference>
<dbReference type="STRING" id="3702.O81000"/>
<dbReference type="GlyGen" id="O81000">
    <property type="glycosylation" value="1 site"/>
</dbReference>
<dbReference type="PaxDb" id="3702-AT2G22830.1"/>
<dbReference type="ProteomicsDB" id="220574"/>
<dbReference type="EnsemblPlants" id="AT2G22830.1">
    <property type="protein sequence ID" value="AT2G22830.1"/>
    <property type="gene ID" value="AT2G22830"/>
</dbReference>
<dbReference type="GeneID" id="816814"/>
<dbReference type="Gramene" id="AT2G22830.1">
    <property type="protein sequence ID" value="AT2G22830.1"/>
    <property type="gene ID" value="AT2G22830"/>
</dbReference>
<dbReference type="KEGG" id="ath:AT2G22830"/>
<dbReference type="Araport" id="AT2G22830"/>
<dbReference type="TAIR" id="AT2G22830">
    <property type="gene designation" value="SQE2"/>
</dbReference>
<dbReference type="eggNOG" id="KOG1298">
    <property type="taxonomic scope" value="Eukaryota"/>
</dbReference>
<dbReference type="HOGENOM" id="CLU_026390_1_0_1"/>
<dbReference type="InParanoid" id="O81000"/>
<dbReference type="OMA" id="GIQYKTK"/>
<dbReference type="PhylomeDB" id="O81000"/>
<dbReference type="BRENDA" id="1.14.14.17">
    <property type="organism ID" value="399"/>
</dbReference>
<dbReference type="UniPathway" id="UPA00767">
    <property type="reaction ID" value="UER00752"/>
</dbReference>
<dbReference type="PRO" id="PR:O81000"/>
<dbReference type="Proteomes" id="UP000006548">
    <property type="component" value="Chromosome 2"/>
</dbReference>
<dbReference type="ExpressionAtlas" id="O81000">
    <property type="expression patterns" value="baseline and differential"/>
</dbReference>
<dbReference type="GO" id="GO:0031966">
    <property type="term" value="C:mitochondrial membrane"/>
    <property type="evidence" value="ECO:0007669"/>
    <property type="project" value="UniProtKB-SubCell"/>
</dbReference>
<dbReference type="GO" id="GO:0050660">
    <property type="term" value="F:flavin adenine dinucleotide binding"/>
    <property type="evidence" value="ECO:0007669"/>
    <property type="project" value="InterPro"/>
</dbReference>
<dbReference type="GO" id="GO:0004506">
    <property type="term" value="F:squalene monooxygenase activity"/>
    <property type="evidence" value="ECO:0007669"/>
    <property type="project" value="UniProtKB-EC"/>
</dbReference>
<dbReference type="GO" id="GO:0016126">
    <property type="term" value="P:sterol biosynthetic process"/>
    <property type="evidence" value="ECO:0007669"/>
    <property type="project" value="InterPro"/>
</dbReference>
<dbReference type="FunFam" id="3.50.50.60:FF:000074">
    <property type="entry name" value="Squalene monooxygenase 2"/>
    <property type="match status" value="1"/>
</dbReference>
<dbReference type="Gene3D" id="3.50.50.60">
    <property type="entry name" value="FAD/NAD(P)-binding domain"/>
    <property type="match status" value="1"/>
</dbReference>
<dbReference type="InterPro" id="IPR036188">
    <property type="entry name" value="FAD/NAD-bd_sf"/>
</dbReference>
<dbReference type="InterPro" id="IPR013698">
    <property type="entry name" value="Squalene_epoxidase"/>
</dbReference>
<dbReference type="InterPro" id="IPR040125">
    <property type="entry name" value="Squalene_monox"/>
</dbReference>
<dbReference type="PANTHER" id="PTHR10835:SF15">
    <property type="entry name" value="SQUALENE EPOXIDASE 2, MITOCHONDRIAL"/>
    <property type="match status" value="1"/>
</dbReference>
<dbReference type="PANTHER" id="PTHR10835">
    <property type="entry name" value="SQUALENE MONOOXYGENASE"/>
    <property type="match status" value="1"/>
</dbReference>
<dbReference type="Pfam" id="PF13450">
    <property type="entry name" value="NAD_binding_8"/>
    <property type="match status" value="1"/>
</dbReference>
<dbReference type="Pfam" id="PF08491">
    <property type="entry name" value="SE"/>
    <property type="match status" value="1"/>
</dbReference>
<dbReference type="PRINTS" id="PR00420">
    <property type="entry name" value="RNGMNOXGNASE"/>
</dbReference>
<dbReference type="SUPFAM" id="SSF51905">
    <property type="entry name" value="FAD/NAD(P)-binding domain"/>
    <property type="match status" value="1"/>
</dbReference>
<keyword id="KW-0274">FAD</keyword>
<keyword id="KW-0285">Flavoprotein</keyword>
<keyword id="KW-0472">Membrane</keyword>
<keyword id="KW-0496">Mitochondrion</keyword>
<keyword id="KW-0560">Oxidoreductase</keyword>
<keyword id="KW-1185">Reference proteome</keyword>
<keyword id="KW-0809">Transit peptide</keyword>
<keyword id="KW-0812">Transmembrane</keyword>
<keyword id="KW-1133">Transmembrane helix</keyword>
<protein>
    <recommendedName>
        <fullName>Squalene epoxidase 2, mitochondrial</fullName>
        <shortName>AtSQE2</shortName>
        <ecNumber evidence="3">1.14.14.17</ecNumber>
    </recommendedName>
</protein>
<accession>O81000</accession>
<feature type="transit peptide" description="Mitochondrion" evidence="2">
    <location>
        <begin position="1"/>
        <end position="45"/>
    </location>
</feature>
<feature type="chain" id="PRO_0000422764" description="Squalene epoxidase 2, mitochondrial">
    <location>
        <begin position="46"/>
        <end position="585"/>
    </location>
</feature>
<feature type="transmembrane region" description="Helical" evidence="2">
    <location>
        <begin position="70"/>
        <end position="90"/>
    </location>
</feature>
<feature type="transmembrane region" description="Helical" evidence="2">
    <location>
        <begin position="493"/>
        <end position="513"/>
    </location>
</feature>
<feature type="transmembrane region" description="Helical" evidence="2">
    <location>
        <begin position="520"/>
        <end position="540"/>
    </location>
</feature>
<feature type="transmembrane region" description="Helical" evidence="2">
    <location>
        <begin position="545"/>
        <end position="565"/>
    </location>
</feature>
<feature type="binding site" evidence="1">
    <location>
        <begin position="132"/>
        <end position="133"/>
    </location>
    <ligand>
        <name>FAD</name>
        <dbReference type="ChEBI" id="CHEBI:57692"/>
    </ligand>
</feature>
<feature type="binding site" evidence="1">
    <location>
        <begin position="152"/>
        <end position="153"/>
    </location>
    <ligand>
        <name>FAD</name>
        <dbReference type="ChEBI" id="CHEBI:57692"/>
    </ligand>
</feature>
<feature type="binding site" evidence="1">
    <location>
        <position position="160"/>
    </location>
    <ligand>
        <name>FAD</name>
        <dbReference type="ChEBI" id="CHEBI:57692"/>
    </ligand>
</feature>
<feature type="binding site" evidence="1">
    <location>
        <position position="231"/>
    </location>
    <ligand>
        <name>FAD</name>
        <dbReference type="ChEBI" id="CHEBI:57692"/>
    </ligand>
</feature>
<feature type="binding site" evidence="1">
    <location>
        <position position="247"/>
    </location>
    <ligand>
        <name>FAD</name>
        <dbReference type="ChEBI" id="CHEBI:57692"/>
    </ligand>
</feature>
<feature type="binding site" evidence="1">
    <location>
        <position position="409"/>
    </location>
    <ligand>
        <name>FAD</name>
        <dbReference type="ChEBI" id="CHEBI:57692"/>
    </ligand>
</feature>
<feature type="binding site" evidence="1">
    <location>
        <position position="422"/>
    </location>
    <ligand>
        <name>FAD</name>
        <dbReference type="ChEBI" id="CHEBI:57692"/>
    </ligand>
</feature>
<feature type="site" description="Important for enzyme activity" evidence="1">
    <location>
        <position position="194"/>
    </location>
</feature>
<proteinExistence type="evidence at protein level"/>
<comment type="function">
    <text evidence="3">Catalyzes the stereospecific oxidation of squalene to (S)-2,3-epoxysqualene, and is considered to be a rate-limiting enzyme in steroid biosynthesis. Produces primarily oxidosqualene.</text>
</comment>
<comment type="catalytic activity">
    <reaction evidence="3">
        <text>squalene + reduced [NADPH--hemoprotein reductase] + O2 = (S)-2,3-epoxysqualene + oxidized [NADPH--hemoprotein reductase] + H2O + H(+)</text>
        <dbReference type="Rhea" id="RHEA:25282"/>
        <dbReference type="Rhea" id="RHEA-COMP:11964"/>
        <dbReference type="Rhea" id="RHEA-COMP:11965"/>
        <dbReference type="ChEBI" id="CHEBI:15377"/>
        <dbReference type="ChEBI" id="CHEBI:15378"/>
        <dbReference type="ChEBI" id="CHEBI:15379"/>
        <dbReference type="ChEBI" id="CHEBI:15440"/>
        <dbReference type="ChEBI" id="CHEBI:15441"/>
        <dbReference type="ChEBI" id="CHEBI:57618"/>
        <dbReference type="ChEBI" id="CHEBI:58210"/>
        <dbReference type="EC" id="1.14.14.17"/>
    </reaction>
</comment>
<comment type="cofactor">
    <cofactor evidence="1">
        <name>FAD</name>
        <dbReference type="ChEBI" id="CHEBI:57692"/>
    </cofactor>
</comment>
<comment type="pathway">
    <text>Terpene metabolism; lanosterol biosynthesis; lanosterol from farnesyl diphosphate: step 2/3.</text>
</comment>
<comment type="subcellular location">
    <subcellularLocation>
        <location evidence="4">Mitochondrion membrane</location>
        <topology evidence="4">Multi-pass membrane protein</topology>
    </subcellularLocation>
</comment>
<comment type="tissue specificity">
    <text evidence="3">Expressed mainly in inflorescences. Detected in seedlings, leaves, stems, and siliques.</text>
</comment>
<comment type="similarity">
    <text evidence="4">Belongs to the squalene monooxygenase family.</text>
</comment>
<reference key="1">
    <citation type="journal article" date="1999" name="Nature">
        <title>Sequence and analysis of chromosome 2 of the plant Arabidopsis thaliana.</title>
        <authorList>
            <person name="Lin X."/>
            <person name="Kaul S."/>
            <person name="Rounsley S.D."/>
            <person name="Shea T.P."/>
            <person name="Benito M.-I."/>
            <person name="Town C.D."/>
            <person name="Fujii C.Y."/>
            <person name="Mason T.M."/>
            <person name="Bowman C.L."/>
            <person name="Barnstead M.E."/>
            <person name="Feldblyum T.V."/>
            <person name="Buell C.R."/>
            <person name="Ketchum K.A."/>
            <person name="Lee J.J."/>
            <person name="Ronning C.M."/>
            <person name="Koo H.L."/>
            <person name="Moffat K.S."/>
            <person name="Cronin L.A."/>
            <person name="Shen M."/>
            <person name="Pai G."/>
            <person name="Van Aken S."/>
            <person name="Umayam L."/>
            <person name="Tallon L.J."/>
            <person name="Gill J.E."/>
            <person name="Adams M.D."/>
            <person name="Carrera A.J."/>
            <person name="Creasy T.H."/>
            <person name="Goodman H.M."/>
            <person name="Somerville C.R."/>
            <person name="Copenhaver G.P."/>
            <person name="Preuss D."/>
            <person name="Nierman W.C."/>
            <person name="White O."/>
            <person name="Eisen J.A."/>
            <person name="Salzberg S.L."/>
            <person name="Fraser C.M."/>
            <person name="Venter J.C."/>
        </authorList>
    </citation>
    <scope>NUCLEOTIDE SEQUENCE [LARGE SCALE GENOMIC DNA]</scope>
    <source>
        <strain>cv. Columbia</strain>
    </source>
</reference>
<reference key="2">
    <citation type="journal article" date="2017" name="Plant J.">
        <title>Araport11: a complete reannotation of the Arabidopsis thaliana reference genome.</title>
        <authorList>
            <person name="Cheng C.Y."/>
            <person name="Krishnakumar V."/>
            <person name="Chan A.P."/>
            <person name="Thibaud-Nissen F."/>
            <person name="Schobel S."/>
            <person name="Town C.D."/>
        </authorList>
    </citation>
    <scope>GENOME REANNOTATION</scope>
    <source>
        <strain>cv. Columbia</strain>
    </source>
</reference>
<reference key="3">
    <citation type="journal article" date="2007" name="J. Biol. Chem.">
        <title>Arabidopsis thaliana squalene epoxidase 1 is essential for root and seed development.</title>
        <authorList>
            <person name="Rasbery J.M."/>
            <person name="Shan H."/>
            <person name="LeClair R.J."/>
            <person name="Norman M."/>
            <person name="Matsuda S.P."/>
            <person name="Bartel B."/>
        </authorList>
    </citation>
    <scope>IDENTIFICATION</scope>
    <scope>FUNCTION</scope>
    <scope>CATALYTIC ACTIVITY</scope>
    <scope>TISSUE SPECIFICITY</scope>
    <scope>GENE FAMILY</scope>
    <scope>NOMENCLATURE</scope>
</reference>
<gene>
    <name type="primary">SQE2</name>
    <name type="ordered locus">At2g22830</name>
    <name type="ORF">T20K9.4</name>
</gene>